<comment type="function">
    <text evidence="1">The glycine cleavage system catalyzes the degradation of glycine. The P protein binds the alpha-amino group of glycine through its pyridoxal phosphate cofactor; CO(2) is released and the remaining methylamine moiety is then transferred to the lipoamide cofactor of the H protein.</text>
</comment>
<comment type="catalytic activity">
    <reaction evidence="1">
        <text>N(6)-[(R)-lipoyl]-L-lysyl-[glycine-cleavage complex H protein] + glycine + H(+) = N(6)-[(R)-S(8)-aminomethyldihydrolipoyl]-L-lysyl-[glycine-cleavage complex H protein] + CO2</text>
        <dbReference type="Rhea" id="RHEA:24304"/>
        <dbReference type="Rhea" id="RHEA-COMP:10494"/>
        <dbReference type="Rhea" id="RHEA-COMP:10495"/>
        <dbReference type="ChEBI" id="CHEBI:15378"/>
        <dbReference type="ChEBI" id="CHEBI:16526"/>
        <dbReference type="ChEBI" id="CHEBI:57305"/>
        <dbReference type="ChEBI" id="CHEBI:83099"/>
        <dbReference type="ChEBI" id="CHEBI:83143"/>
        <dbReference type="EC" id="1.4.4.2"/>
    </reaction>
</comment>
<comment type="cofactor">
    <cofactor evidence="1">
        <name>pyridoxal 5'-phosphate</name>
        <dbReference type="ChEBI" id="CHEBI:597326"/>
    </cofactor>
</comment>
<comment type="subunit">
    <text evidence="1">The glycine cleavage system is composed of four proteins: P, T, L and H. In this organism, the P 'protein' is a heterodimer of two subunits.</text>
</comment>
<comment type="similarity">
    <text evidence="1">Belongs to the GcvP family. C-terminal subunit subfamily.</text>
</comment>
<gene>
    <name evidence="1" type="primary">gcvPB</name>
    <name type="ordered locus">USA300HOU_1536</name>
</gene>
<protein>
    <recommendedName>
        <fullName evidence="1">Probable glycine dehydrogenase (decarboxylating) subunit 2</fullName>
        <ecNumber evidence="1">1.4.4.2</ecNumber>
    </recommendedName>
    <alternativeName>
        <fullName evidence="1">Glycine cleavage system P-protein subunit 2</fullName>
    </alternativeName>
    <alternativeName>
        <fullName evidence="1">Glycine decarboxylase subunit 2</fullName>
    </alternativeName>
    <alternativeName>
        <fullName evidence="1">Glycine dehydrogenase (aminomethyl-transferring) subunit 2</fullName>
    </alternativeName>
</protein>
<evidence type="ECO:0000255" key="1">
    <source>
        <dbReference type="HAMAP-Rule" id="MF_00713"/>
    </source>
</evidence>
<organism>
    <name type="scientific">Staphylococcus aureus (strain USA300 / TCH1516)</name>
    <dbReference type="NCBI Taxonomy" id="451516"/>
    <lineage>
        <taxon>Bacteria</taxon>
        <taxon>Bacillati</taxon>
        <taxon>Bacillota</taxon>
        <taxon>Bacilli</taxon>
        <taxon>Bacillales</taxon>
        <taxon>Staphylococcaceae</taxon>
        <taxon>Staphylococcus</taxon>
    </lineage>
</organism>
<sequence>MTSKSSPLIFERSREGRYAYSLPKSDIKTNSVESLLDDKFIRKNKAEFPEVAELDLVRHYTELSNKNFGVDNGFYPLGSCTMKYNPKINEKVARIPGFSESHPLQDEDQVQGSLEIIYSLQEELKEITGMDEVTLQPAAGAHGEWTALMIFKAYHENNGEGHRDEVIVPDSAHGTNPASASFAGFKSVTVKSNERGEVDIDDLKRVVNENTAAIMLTNPNTLGIFEKNIMEIREIVHNAGGLLYYDGANLNAIMDKVRPGDMGFDAVHLNLHKTFTGPHGGGGPGSGPVGVVKELASYLPKPMVIKDGDKFKYDNDIKNSIGRVKPFYGNFGIYLRAYTYIRTMGATGLKEVSEAAVLNANYIKARLSKHFEIPYKQYCKHEFVLSGVRQKEFGVRTLDMAKRLLDFGVHPPTIYFPLNVEEGMMIEPTETESKETLDYFIDTLISIAEEAKNDPDKVLEAPHTTVIDRLDEATAARKPILKFENLKQEK</sequence>
<reference key="1">
    <citation type="journal article" date="2007" name="BMC Microbiol.">
        <title>Subtle genetic changes enhance virulence of methicillin resistant and sensitive Staphylococcus aureus.</title>
        <authorList>
            <person name="Highlander S.K."/>
            <person name="Hulten K.G."/>
            <person name="Qin X."/>
            <person name="Jiang H."/>
            <person name="Yerrapragada S."/>
            <person name="Mason E.O. Jr."/>
            <person name="Shang Y."/>
            <person name="Williams T.M."/>
            <person name="Fortunov R.M."/>
            <person name="Liu Y."/>
            <person name="Igboeli O."/>
            <person name="Petrosino J."/>
            <person name="Tirumalai M."/>
            <person name="Uzman A."/>
            <person name="Fox G.E."/>
            <person name="Cardenas A.M."/>
            <person name="Muzny D.M."/>
            <person name="Hemphill L."/>
            <person name="Ding Y."/>
            <person name="Dugan S."/>
            <person name="Blyth P.R."/>
            <person name="Buhay C.J."/>
            <person name="Dinh H.H."/>
            <person name="Hawes A.C."/>
            <person name="Holder M."/>
            <person name="Kovar C.L."/>
            <person name="Lee S.L."/>
            <person name="Liu W."/>
            <person name="Nazareth L.V."/>
            <person name="Wang Q."/>
            <person name="Zhou J."/>
            <person name="Kaplan S.L."/>
            <person name="Weinstock G.M."/>
        </authorList>
    </citation>
    <scope>NUCLEOTIDE SEQUENCE [LARGE SCALE GENOMIC DNA]</scope>
    <source>
        <strain>USA300 / TCH1516</strain>
    </source>
</reference>
<name>GCSPB_STAAT</name>
<dbReference type="EC" id="1.4.4.2" evidence="1"/>
<dbReference type="EMBL" id="CP000730">
    <property type="protein sequence ID" value="ABX29543.1"/>
    <property type="molecule type" value="Genomic_DNA"/>
</dbReference>
<dbReference type="RefSeq" id="WP_000202189.1">
    <property type="nucleotide sequence ID" value="NC_010079.1"/>
</dbReference>
<dbReference type="SMR" id="A8Z474"/>
<dbReference type="KEGG" id="sax:USA300HOU_1536"/>
<dbReference type="HOGENOM" id="CLU_004620_5_0_9"/>
<dbReference type="GO" id="GO:0005829">
    <property type="term" value="C:cytosol"/>
    <property type="evidence" value="ECO:0007669"/>
    <property type="project" value="TreeGrafter"/>
</dbReference>
<dbReference type="GO" id="GO:0005960">
    <property type="term" value="C:glycine cleavage complex"/>
    <property type="evidence" value="ECO:0007669"/>
    <property type="project" value="TreeGrafter"/>
</dbReference>
<dbReference type="GO" id="GO:0016594">
    <property type="term" value="F:glycine binding"/>
    <property type="evidence" value="ECO:0007669"/>
    <property type="project" value="TreeGrafter"/>
</dbReference>
<dbReference type="GO" id="GO:0004375">
    <property type="term" value="F:glycine dehydrogenase (decarboxylating) activity"/>
    <property type="evidence" value="ECO:0007669"/>
    <property type="project" value="UniProtKB-EC"/>
</dbReference>
<dbReference type="GO" id="GO:0030170">
    <property type="term" value="F:pyridoxal phosphate binding"/>
    <property type="evidence" value="ECO:0007669"/>
    <property type="project" value="TreeGrafter"/>
</dbReference>
<dbReference type="GO" id="GO:0019464">
    <property type="term" value="P:glycine decarboxylation via glycine cleavage system"/>
    <property type="evidence" value="ECO:0007669"/>
    <property type="project" value="UniProtKB-UniRule"/>
</dbReference>
<dbReference type="CDD" id="cd00613">
    <property type="entry name" value="GDC-P"/>
    <property type="match status" value="1"/>
</dbReference>
<dbReference type="FunFam" id="3.40.640.10:FF:000034">
    <property type="entry name" value="Probable glycine dehydrogenase (decarboxylating) subunit 2"/>
    <property type="match status" value="1"/>
</dbReference>
<dbReference type="FunFam" id="3.90.1150.10:FF:000014">
    <property type="entry name" value="Probable glycine dehydrogenase (decarboxylating) subunit 2"/>
    <property type="match status" value="1"/>
</dbReference>
<dbReference type="Gene3D" id="6.20.440.10">
    <property type="match status" value="1"/>
</dbReference>
<dbReference type="Gene3D" id="3.90.1150.10">
    <property type="entry name" value="Aspartate Aminotransferase, domain 1"/>
    <property type="match status" value="1"/>
</dbReference>
<dbReference type="Gene3D" id="3.40.640.10">
    <property type="entry name" value="Type I PLP-dependent aspartate aminotransferase-like (Major domain)"/>
    <property type="match status" value="1"/>
</dbReference>
<dbReference type="HAMAP" id="MF_00713">
    <property type="entry name" value="GcvPB"/>
    <property type="match status" value="1"/>
</dbReference>
<dbReference type="InterPro" id="IPR000192">
    <property type="entry name" value="Aminotrans_V_dom"/>
</dbReference>
<dbReference type="InterPro" id="IPR023012">
    <property type="entry name" value="GcvPB"/>
</dbReference>
<dbReference type="InterPro" id="IPR049316">
    <property type="entry name" value="GDC-P_C"/>
</dbReference>
<dbReference type="InterPro" id="IPR020581">
    <property type="entry name" value="GDC_P"/>
</dbReference>
<dbReference type="InterPro" id="IPR015424">
    <property type="entry name" value="PyrdxlP-dep_Trfase"/>
</dbReference>
<dbReference type="InterPro" id="IPR015421">
    <property type="entry name" value="PyrdxlP-dep_Trfase_major"/>
</dbReference>
<dbReference type="InterPro" id="IPR015422">
    <property type="entry name" value="PyrdxlP-dep_Trfase_small"/>
</dbReference>
<dbReference type="NCBIfam" id="NF003346">
    <property type="entry name" value="PRK04366.1"/>
    <property type="match status" value="1"/>
</dbReference>
<dbReference type="PANTHER" id="PTHR11773:SF1">
    <property type="entry name" value="GLYCINE DEHYDROGENASE (DECARBOXYLATING), MITOCHONDRIAL"/>
    <property type="match status" value="1"/>
</dbReference>
<dbReference type="PANTHER" id="PTHR11773">
    <property type="entry name" value="GLYCINE DEHYDROGENASE, DECARBOXYLATING"/>
    <property type="match status" value="1"/>
</dbReference>
<dbReference type="Pfam" id="PF00266">
    <property type="entry name" value="Aminotran_5"/>
    <property type="match status" value="1"/>
</dbReference>
<dbReference type="Pfam" id="PF21478">
    <property type="entry name" value="GcvP2_C"/>
    <property type="match status" value="1"/>
</dbReference>
<dbReference type="SUPFAM" id="SSF53383">
    <property type="entry name" value="PLP-dependent transferases"/>
    <property type="match status" value="1"/>
</dbReference>
<proteinExistence type="inferred from homology"/>
<accession>A8Z474</accession>
<feature type="chain" id="PRO_1000083234" description="Probable glycine dehydrogenase (decarboxylating) subunit 2">
    <location>
        <begin position="1"/>
        <end position="490"/>
    </location>
</feature>
<feature type="modified residue" description="N6-(pyridoxal phosphate)lysine" evidence="1">
    <location>
        <position position="273"/>
    </location>
</feature>
<keyword id="KW-0560">Oxidoreductase</keyword>
<keyword id="KW-0663">Pyridoxal phosphate</keyword>